<keyword id="KW-0963">Cytoplasm</keyword>
<keyword id="KW-0690">Ribosome biogenesis</keyword>
<organism>
    <name type="scientific">Leptospira biflexa serovar Patoc (strain Patoc 1 / Ames)</name>
    <dbReference type="NCBI Taxonomy" id="355278"/>
    <lineage>
        <taxon>Bacteria</taxon>
        <taxon>Pseudomonadati</taxon>
        <taxon>Spirochaetota</taxon>
        <taxon>Spirochaetia</taxon>
        <taxon>Leptospirales</taxon>
        <taxon>Leptospiraceae</taxon>
        <taxon>Leptospira</taxon>
    </lineage>
</organism>
<reference key="1">
    <citation type="journal article" date="2008" name="PLoS ONE">
        <title>Genome sequence of the saprophyte Leptospira biflexa provides insights into the evolution of Leptospira and the pathogenesis of leptospirosis.</title>
        <authorList>
            <person name="Picardeau M."/>
            <person name="Bulach D.M."/>
            <person name="Bouchier C."/>
            <person name="Zuerner R.L."/>
            <person name="Zidane N."/>
            <person name="Wilson P.J."/>
            <person name="Creno S."/>
            <person name="Kuczek E.S."/>
            <person name="Bommezzadri S."/>
            <person name="Davis J.C."/>
            <person name="McGrath A."/>
            <person name="Johnson M.J."/>
            <person name="Boursaux-Eude C."/>
            <person name="Seemann T."/>
            <person name="Rouy Z."/>
            <person name="Coppel R.L."/>
            <person name="Rood J.I."/>
            <person name="Lajus A."/>
            <person name="Davies J.K."/>
            <person name="Medigue C."/>
            <person name="Adler B."/>
        </authorList>
    </citation>
    <scope>NUCLEOTIDE SEQUENCE [LARGE SCALE GENOMIC DNA]</scope>
    <source>
        <strain>Patoc 1 / Ames</strain>
    </source>
</reference>
<gene>
    <name evidence="1" type="primary">rbfA</name>
    <name type="ordered locus">LBF_1473</name>
</gene>
<evidence type="ECO:0000255" key="1">
    <source>
        <dbReference type="HAMAP-Rule" id="MF_00003"/>
    </source>
</evidence>
<evidence type="ECO:0000256" key="2">
    <source>
        <dbReference type="SAM" id="MobiDB-lite"/>
    </source>
</evidence>
<sequence>MNPIRMKKLESEIIRQISTAILEGKVKDPRVFLPSFHRIEISEDLKYAKVYFTALCNNNERKKLTQGLVSCAGFLSSFVGKNLRLHTNPKFTFVWDNSYIKSLEVNRLIDDSAPKTLFEELHPNPEEDDGDTDAETLLEDSESGIERET</sequence>
<protein>
    <recommendedName>
        <fullName evidence="1">Ribosome-binding factor A</fullName>
    </recommendedName>
</protein>
<comment type="function">
    <text evidence="1">One of several proteins that assist in the late maturation steps of the functional core of the 30S ribosomal subunit. Associates with free 30S ribosomal subunits (but not with 30S subunits that are part of 70S ribosomes or polysomes). Required for efficient processing of 16S rRNA. May interact with the 5'-terminal helix region of 16S rRNA.</text>
</comment>
<comment type="subunit">
    <text evidence="1">Monomer. Binds 30S ribosomal subunits, but not 50S ribosomal subunits or 70S ribosomes.</text>
</comment>
<comment type="subcellular location">
    <subcellularLocation>
        <location evidence="1">Cytoplasm</location>
    </subcellularLocation>
</comment>
<comment type="similarity">
    <text evidence="1">Belongs to the RbfA family.</text>
</comment>
<dbReference type="EMBL" id="CP000777">
    <property type="protein sequence ID" value="ABZ93986.1"/>
    <property type="molecule type" value="Genomic_DNA"/>
</dbReference>
<dbReference type="RefSeq" id="WP_012388512.1">
    <property type="nucleotide sequence ID" value="NC_010842.1"/>
</dbReference>
<dbReference type="SMR" id="B0SH19"/>
<dbReference type="KEGG" id="lbf:LBF_1473"/>
<dbReference type="HOGENOM" id="CLU_089475_5_0_12"/>
<dbReference type="GO" id="GO:0005829">
    <property type="term" value="C:cytosol"/>
    <property type="evidence" value="ECO:0007669"/>
    <property type="project" value="TreeGrafter"/>
</dbReference>
<dbReference type="GO" id="GO:0043024">
    <property type="term" value="F:ribosomal small subunit binding"/>
    <property type="evidence" value="ECO:0007669"/>
    <property type="project" value="TreeGrafter"/>
</dbReference>
<dbReference type="GO" id="GO:0030490">
    <property type="term" value="P:maturation of SSU-rRNA"/>
    <property type="evidence" value="ECO:0007669"/>
    <property type="project" value="UniProtKB-UniRule"/>
</dbReference>
<dbReference type="Gene3D" id="3.30.300.20">
    <property type="match status" value="1"/>
</dbReference>
<dbReference type="HAMAP" id="MF_00003">
    <property type="entry name" value="RbfA"/>
    <property type="match status" value="1"/>
</dbReference>
<dbReference type="InterPro" id="IPR015946">
    <property type="entry name" value="KH_dom-like_a/b"/>
</dbReference>
<dbReference type="InterPro" id="IPR000238">
    <property type="entry name" value="RbfA"/>
</dbReference>
<dbReference type="InterPro" id="IPR023799">
    <property type="entry name" value="RbfA_dom_sf"/>
</dbReference>
<dbReference type="NCBIfam" id="TIGR00082">
    <property type="entry name" value="rbfA"/>
    <property type="match status" value="1"/>
</dbReference>
<dbReference type="PANTHER" id="PTHR33515">
    <property type="entry name" value="RIBOSOME-BINDING FACTOR A, CHLOROPLASTIC-RELATED"/>
    <property type="match status" value="1"/>
</dbReference>
<dbReference type="PANTHER" id="PTHR33515:SF1">
    <property type="entry name" value="RIBOSOME-BINDING FACTOR A, CHLOROPLASTIC-RELATED"/>
    <property type="match status" value="1"/>
</dbReference>
<dbReference type="Pfam" id="PF02033">
    <property type="entry name" value="RBFA"/>
    <property type="match status" value="1"/>
</dbReference>
<dbReference type="SUPFAM" id="SSF89919">
    <property type="entry name" value="Ribosome-binding factor A, RbfA"/>
    <property type="match status" value="1"/>
</dbReference>
<feature type="chain" id="PRO_1000088901" description="Ribosome-binding factor A">
    <location>
        <begin position="1"/>
        <end position="149"/>
    </location>
</feature>
<feature type="region of interest" description="Disordered" evidence="2">
    <location>
        <begin position="116"/>
        <end position="149"/>
    </location>
</feature>
<feature type="compositionally biased region" description="Basic and acidic residues" evidence="2">
    <location>
        <begin position="116"/>
        <end position="125"/>
    </location>
</feature>
<feature type="compositionally biased region" description="Acidic residues" evidence="2">
    <location>
        <begin position="126"/>
        <end position="143"/>
    </location>
</feature>
<accession>B0SH19</accession>
<name>RBFA_LEPBA</name>
<proteinExistence type="inferred from homology"/>